<evidence type="ECO:0000255" key="1">
    <source>
        <dbReference type="PROSITE-ProRule" id="PRU00253"/>
    </source>
</evidence>
<evidence type="ECO:0000305" key="2"/>
<organism>
    <name type="scientific">Agrobacterium fabrum (strain C58 / ATCC 33970)</name>
    <name type="common">Agrobacterium tumefaciens (strain C58)</name>
    <dbReference type="NCBI Taxonomy" id="176299"/>
    <lineage>
        <taxon>Bacteria</taxon>
        <taxon>Pseudomonadati</taxon>
        <taxon>Pseudomonadota</taxon>
        <taxon>Alphaproteobacteria</taxon>
        <taxon>Hyphomicrobiales</taxon>
        <taxon>Rhizobiaceae</taxon>
        <taxon>Rhizobium/Agrobacterium group</taxon>
        <taxon>Agrobacterium</taxon>
        <taxon>Agrobacterium tumefaciens complex</taxon>
    </lineage>
</organism>
<protein>
    <recommendedName>
        <fullName>Regulatory protein NocR</fullName>
    </recommendedName>
</protein>
<comment type="function">
    <text>Positive regulatory protein for the noc operon involved in nopaline catabolism and uptake.</text>
</comment>
<comment type="similarity">
    <text evidence="2">Belongs to the LysR transcriptional regulatory family.</text>
</comment>
<comment type="sequence caution" evidence="2">
    <conflict type="erroneous initiation">
        <sequence resource="EMBL-CDS" id="AAA50519"/>
    </conflict>
</comment>
<comment type="sequence caution" evidence="2">
    <conflict type="erroneous initiation">
        <sequence resource="EMBL-CDS" id="AAK90987"/>
    </conflict>
</comment>
<sequence length="300" mass="32916">MIQSRQLEAFRAVMLTGGMTSAANLVRITQPAISRLIRDLEEEIGISLFERTGNRLRPTREAGILFKEVSRHFNGIQHIDKVAAELKKSHMGSLRVACYTAPALSFMSGVIQTFIADRPDVSVYLDTVPSQTVLELVSLQHYDLGISILAGDYPGLTTEPVPSFRAVCLLPPGHRLEDKETVHATDLEGESLICLSPVSLLRMQTDAALDSCGVHCNRRIESSLALNLCDLVSRGMGVGIVDPFTADYYSANPVIQRSFDPVVPYHFAIVLPTDSPPPRLVSEFRAALLDALKALPYETI</sequence>
<accession>Q00678</accession>
<geneLocation type="plasmid">
    <name>pTiC58</name>
</geneLocation>
<gene>
    <name type="primary">nocR</name>
    <name type="ordered locus">Atu6029</name>
    <name type="ORF">AGR_pTi_70</name>
</gene>
<reference key="1">
    <citation type="journal article" date="1991" name="Mol. Plant Microbe Interact.">
        <title>Positive regulators of opine-inducible promoters in the nopaline and octopine catabolism regions of Ti plasmids.</title>
        <authorList>
            <person name="von Lintig J."/>
            <person name="Zanker H."/>
            <person name="Schroeder J."/>
        </authorList>
    </citation>
    <scope>NUCLEOTIDE SEQUENCE [GENOMIC DNA]</scope>
</reference>
<reference key="2">
    <citation type="journal article" date="2001" name="Science">
        <title>The genome of the natural genetic engineer Agrobacterium tumefaciens C58.</title>
        <authorList>
            <person name="Wood D.W."/>
            <person name="Setubal J.C."/>
            <person name="Kaul R."/>
            <person name="Monks D.E."/>
            <person name="Kitajima J.P."/>
            <person name="Okura V.K."/>
            <person name="Zhou Y."/>
            <person name="Chen L."/>
            <person name="Wood G.E."/>
            <person name="Almeida N.F. Jr."/>
            <person name="Woo L."/>
            <person name="Chen Y."/>
            <person name="Paulsen I.T."/>
            <person name="Eisen J.A."/>
            <person name="Karp P.D."/>
            <person name="Bovee D. Sr."/>
            <person name="Chapman P."/>
            <person name="Clendenning J."/>
            <person name="Deatherage G."/>
            <person name="Gillet W."/>
            <person name="Grant C."/>
            <person name="Kutyavin T."/>
            <person name="Levy R."/>
            <person name="Li M.-J."/>
            <person name="McClelland E."/>
            <person name="Palmieri A."/>
            <person name="Raymond C."/>
            <person name="Rouse G."/>
            <person name="Saenphimmachak C."/>
            <person name="Wu Z."/>
            <person name="Romero P."/>
            <person name="Gordon D."/>
            <person name="Zhang S."/>
            <person name="Yoo H."/>
            <person name="Tao Y."/>
            <person name="Biddle P."/>
            <person name="Jung M."/>
            <person name="Krespan W."/>
            <person name="Perry M."/>
            <person name="Gordon-Kamm B."/>
            <person name="Liao L."/>
            <person name="Kim S."/>
            <person name="Hendrick C."/>
            <person name="Zhao Z.-Y."/>
            <person name="Dolan M."/>
            <person name="Chumley F."/>
            <person name="Tingey S.V."/>
            <person name="Tomb J.-F."/>
            <person name="Gordon M.P."/>
            <person name="Olson M.V."/>
            <person name="Nester E.W."/>
        </authorList>
    </citation>
    <scope>NUCLEOTIDE SEQUENCE [LARGE SCALE GENOMIC DNA]</scope>
</reference>
<reference key="3">
    <citation type="journal article" date="2001" name="Science">
        <title>Genome sequence of the plant pathogen and biotechnology agent Agrobacterium tumefaciens C58.</title>
        <authorList>
            <person name="Goodner B."/>
            <person name="Hinkle G."/>
            <person name="Gattung S."/>
            <person name="Miller N."/>
            <person name="Blanchard M."/>
            <person name="Qurollo B."/>
            <person name="Goldman B.S."/>
            <person name="Cao Y."/>
            <person name="Askenazi M."/>
            <person name="Halling C."/>
            <person name="Mullin L."/>
            <person name="Houmiel K."/>
            <person name="Gordon J."/>
            <person name="Vaudin M."/>
            <person name="Iartchouk O."/>
            <person name="Epp A."/>
            <person name="Liu F."/>
            <person name="Wollam C."/>
            <person name="Allinger M."/>
            <person name="Doughty D."/>
            <person name="Scott C."/>
            <person name="Lappas C."/>
            <person name="Markelz B."/>
            <person name="Flanagan C."/>
            <person name="Crowell C."/>
            <person name="Gurson J."/>
            <person name="Lomo C."/>
            <person name="Sear C."/>
            <person name="Strub G."/>
            <person name="Cielo C."/>
            <person name="Slater S."/>
        </authorList>
    </citation>
    <scope>NUCLEOTIDE SEQUENCE [LARGE SCALE GENOMIC DNA]</scope>
    <source>
        <strain>C58 / ATCC 33970</strain>
    </source>
</reference>
<dbReference type="EMBL" id="M65107">
    <property type="protein sequence ID" value="AAA50519.1"/>
    <property type="status" value="ALT_INIT"/>
    <property type="molecule type" value="Genomic_DNA"/>
</dbReference>
<dbReference type="EMBL" id="AE007871">
    <property type="protein sequence ID" value="AAK90987.2"/>
    <property type="status" value="ALT_INIT"/>
    <property type="molecule type" value="Genomic_DNA"/>
</dbReference>
<dbReference type="RefSeq" id="NP_396546.3">
    <property type="nucleotide sequence ID" value="NC_003065.3"/>
</dbReference>
<dbReference type="RefSeq" id="WP_065702830.1">
    <property type="nucleotide sequence ID" value="NC_003065.3"/>
</dbReference>
<dbReference type="SMR" id="Q00678"/>
<dbReference type="DNASU" id="1137352"/>
<dbReference type="EnsemblBacteria" id="AAK90987">
    <property type="protein sequence ID" value="AAK90987"/>
    <property type="gene ID" value="Atu6029"/>
</dbReference>
<dbReference type="GeneID" id="1137352"/>
<dbReference type="KEGG" id="atu:Atu6029"/>
<dbReference type="PATRIC" id="fig|176299.10.peg.5236"/>
<dbReference type="HOGENOM" id="CLU_039613_6_3_5"/>
<dbReference type="OrthoDB" id="7260751at2"/>
<dbReference type="Proteomes" id="UP000000813">
    <property type="component" value="Plasmid Ti"/>
</dbReference>
<dbReference type="GO" id="GO:0003700">
    <property type="term" value="F:DNA-binding transcription factor activity"/>
    <property type="evidence" value="ECO:0007669"/>
    <property type="project" value="InterPro"/>
</dbReference>
<dbReference type="GO" id="GO:0043565">
    <property type="term" value="F:sequence-specific DNA binding"/>
    <property type="evidence" value="ECO:0007669"/>
    <property type="project" value="TreeGrafter"/>
</dbReference>
<dbReference type="GO" id="GO:0010628">
    <property type="term" value="P:positive regulation of gene expression"/>
    <property type="evidence" value="ECO:0007669"/>
    <property type="project" value="TreeGrafter"/>
</dbReference>
<dbReference type="CDD" id="cd08415">
    <property type="entry name" value="PBP2_LysR_opines_like"/>
    <property type="match status" value="1"/>
</dbReference>
<dbReference type="Gene3D" id="3.40.190.10">
    <property type="entry name" value="Periplasmic binding protein-like II"/>
    <property type="match status" value="2"/>
</dbReference>
<dbReference type="Gene3D" id="1.10.10.10">
    <property type="entry name" value="Winged helix-like DNA-binding domain superfamily/Winged helix DNA-binding domain"/>
    <property type="match status" value="1"/>
</dbReference>
<dbReference type="InterPro" id="IPR005119">
    <property type="entry name" value="LysR_subst-bd"/>
</dbReference>
<dbReference type="InterPro" id="IPR037424">
    <property type="entry name" value="NocR_PBP2"/>
</dbReference>
<dbReference type="InterPro" id="IPR000847">
    <property type="entry name" value="Tscrpt_reg_HTH_LysR"/>
</dbReference>
<dbReference type="InterPro" id="IPR036388">
    <property type="entry name" value="WH-like_DNA-bd_sf"/>
</dbReference>
<dbReference type="InterPro" id="IPR036390">
    <property type="entry name" value="WH_DNA-bd_sf"/>
</dbReference>
<dbReference type="PANTHER" id="PTHR30427">
    <property type="entry name" value="TRANSCRIPTIONAL ACTIVATOR PROTEIN LYSR"/>
    <property type="match status" value="1"/>
</dbReference>
<dbReference type="PANTHER" id="PTHR30427:SF1">
    <property type="entry name" value="TRANSCRIPTIONAL ACTIVATOR PROTEIN LYSR"/>
    <property type="match status" value="1"/>
</dbReference>
<dbReference type="Pfam" id="PF00126">
    <property type="entry name" value="HTH_1"/>
    <property type="match status" value="1"/>
</dbReference>
<dbReference type="Pfam" id="PF03466">
    <property type="entry name" value="LysR_substrate"/>
    <property type="match status" value="1"/>
</dbReference>
<dbReference type="PRINTS" id="PR00039">
    <property type="entry name" value="HTHLYSR"/>
</dbReference>
<dbReference type="SUPFAM" id="SSF53850">
    <property type="entry name" value="Periplasmic binding protein-like II"/>
    <property type="match status" value="1"/>
</dbReference>
<dbReference type="SUPFAM" id="SSF46785">
    <property type="entry name" value="Winged helix' DNA-binding domain"/>
    <property type="match status" value="1"/>
</dbReference>
<dbReference type="PROSITE" id="PS50931">
    <property type="entry name" value="HTH_LYSR"/>
    <property type="match status" value="1"/>
</dbReference>
<name>NOCR_AGRFC</name>
<feature type="chain" id="PRO_0000105694" description="Regulatory protein NocR">
    <location>
        <begin position="1"/>
        <end position="300"/>
    </location>
</feature>
<feature type="domain" description="HTH lysR-type" evidence="1">
    <location>
        <begin position="1"/>
        <end position="59"/>
    </location>
</feature>
<feature type="DNA-binding region" description="H-T-H motif" evidence="1">
    <location>
        <begin position="19"/>
        <end position="38"/>
    </location>
</feature>
<keyword id="KW-0010">Activator</keyword>
<keyword id="KW-0238">DNA-binding</keyword>
<keyword id="KW-0614">Plasmid</keyword>
<keyword id="KW-1185">Reference proteome</keyword>
<keyword id="KW-0804">Transcription</keyword>
<keyword id="KW-0805">Transcription regulation</keyword>
<proteinExistence type="inferred from homology"/>